<keyword id="KW-0249">Electron transport</keyword>
<keyword id="KW-0349">Heme</keyword>
<keyword id="KW-0408">Iron</keyword>
<keyword id="KW-0472">Membrane</keyword>
<keyword id="KW-0479">Metal-binding</keyword>
<keyword id="KW-0496">Mitochondrion</keyword>
<keyword id="KW-0999">Mitochondrion inner membrane</keyword>
<keyword id="KW-0679">Respiratory chain</keyword>
<keyword id="KW-0812">Transmembrane</keyword>
<keyword id="KW-1133">Transmembrane helix</keyword>
<keyword id="KW-0813">Transport</keyword>
<keyword id="KW-0830">Ubiquinone</keyword>
<geneLocation type="mitochondrion"/>
<feature type="chain" id="PRO_0000061697" description="Cytochrome b">
    <location>
        <begin position="1"/>
        <end position="380"/>
    </location>
</feature>
<feature type="transmembrane region" description="Helical" evidence="2">
    <location>
        <begin position="34"/>
        <end position="54"/>
    </location>
</feature>
<feature type="transmembrane region" description="Helical" evidence="2">
    <location>
        <begin position="78"/>
        <end position="99"/>
    </location>
</feature>
<feature type="transmembrane region" description="Helical" evidence="2">
    <location>
        <begin position="114"/>
        <end position="134"/>
    </location>
</feature>
<feature type="transmembrane region" description="Helical" evidence="2">
    <location>
        <begin position="179"/>
        <end position="199"/>
    </location>
</feature>
<feature type="transmembrane region" description="Helical" evidence="2">
    <location>
        <begin position="227"/>
        <end position="247"/>
    </location>
</feature>
<feature type="transmembrane region" description="Helical" evidence="2">
    <location>
        <begin position="289"/>
        <end position="309"/>
    </location>
</feature>
<feature type="transmembrane region" description="Helical" evidence="2">
    <location>
        <begin position="321"/>
        <end position="341"/>
    </location>
</feature>
<feature type="transmembrane region" description="Helical" evidence="2">
    <location>
        <begin position="348"/>
        <end position="368"/>
    </location>
</feature>
<feature type="binding site" description="axial binding residue" evidence="2">
    <location>
        <position position="84"/>
    </location>
    <ligand>
        <name>heme b</name>
        <dbReference type="ChEBI" id="CHEBI:60344"/>
        <label>b562</label>
    </ligand>
    <ligandPart>
        <name>Fe</name>
        <dbReference type="ChEBI" id="CHEBI:18248"/>
    </ligandPart>
</feature>
<feature type="binding site" description="axial binding residue" evidence="2">
    <location>
        <position position="98"/>
    </location>
    <ligand>
        <name>heme b</name>
        <dbReference type="ChEBI" id="CHEBI:60344"/>
        <label>b566</label>
    </ligand>
    <ligandPart>
        <name>Fe</name>
        <dbReference type="ChEBI" id="CHEBI:18248"/>
    </ligandPart>
</feature>
<feature type="binding site" description="axial binding residue" evidence="2">
    <location>
        <position position="183"/>
    </location>
    <ligand>
        <name>heme b</name>
        <dbReference type="ChEBI" id="CHEBI:60344"/>
        <label>b562</label>
    </ligand>
    <ligandPart>
        <name>Fe</name>
        <dbReference type="ChEBI" id="CHEBI:18248"/>
    </ligandPart>
</feature>
<feature type="binding site" description="axial binding residue" evidence="2">
    <location>
        <position position="197"/>
    </location>
    <ligand>
        <name>heme b</name>
        <dbReference type="ChEBI" id="CHEBI:60344"/>
        <label>b566</label>
    </ligand>
    <ligandPart>
        <name>Fe</name>
        <dbReference type="ChEBI" id="CHEBI:18248"/>
    </ligandPart>
</feature>
<feature type="binding site" evidence="2">
    <location>
        <position position="202"/>
    </location>
    <ligand>
        <name>a ubiquinone</name>
        <dbReference type="ChEBI" id="CHEBI:16389"/>
    </ligand>
</feature>
<dbReference type="EMBL" id="AJ242687">
    <property type="protein sequence ID" value="CAC80355.1"/>
    <property type="molecule type" value="Genomic_DNA"/>
</dbReference>
<dbReference type="SMR" id="Q8LWM2"/>
<dbReference type="GO" id="GO:0005743">
    <property type="term" value="C:mitochondrial inner membrane"/>
    <property type="evidence" value="ECO:0007669"/>
    <property type="project" value="UniProtKB-SubCell"/>
</dbReference>
<dbReference type="GO" id="GO:0045275">
    <property type="term" value="C:respiratory chain complex III"/>
    <property type="evidence" value="ECO:0007669"/>
    <property type="project" value="InterPro"/>
</dbReference>
<dbReference type="GO" id="GO:0046872">
    <property type="term" value="F:metal ion binding"/>
    <property type="evidence" value="ECO:0007669"/>
    <property type="project" value="UniProtKB-KW"/>
</dbReference>
<dbReference type="GO" id="GO:0008121">
    <property type="term" value="F:ubiquinol-cytochrome-c reductase activity"/>
    <property type="evidence" value="ECO:0007669"/>
    <property type="project" value="InterPro"/>
</dbReference>
<dbReference type="GO" id="GO:0006122">
    <property type="term" value="P:mitochondrial electron transport, ubiquinol to cytochrome c"/>
    <property type="evidence" value="ECO:0007669"/>
    <property type="project" value="TreeGrafter"/>
</dbReference>
<dbReference type="CDD" id="cd00290">
    <property type="entry name" value="cytochrome_b_C"/>
    <property type="match status" value="1"/>
</dbReference>
<dbReference type="CDD" id="cd00284">
    <property type="entry name" value="Cytochrome_b_N"/>
    <property type="match status" value="1"/>
</dbReference>
<dbReference type="FunFam" id="1.20.810.10:FF:000002">
    <property type="entry name" value="Cytochrome b"/>
    <property type="match status" value="1"/>
</dbReference>
<dbReference type="Gene3D" id="1.20.810.10">
    <property type="entry name" value="Cytochrome Bc1 Complex, Chain C"/>
    <property type="match status" value="1"/>
</dbReference>
<dbReference type="InterPro" id="IPR005798">
    <property type="entry name" value="Cyt_b/b6_C"/>
</dbReference>
<dbReference type="InterPro" id="IPR036150">
    <property type="entry name" value="Cyt_b/b6_C_sf"/>
</dbReference>
<dbReference type="InterPro" id="IPR005797">
    <property type="entry name" value="Cyt_b/b6_N"/>
</dbReference>
<dbReference type="InterPro" id="IPR027387">
    <property type="entry name" value="Cytb/b6-like_sf"/>
</dbReference>
<dbReference type="InterPro" id="IPR030689">
    <property type="entry name" value="Cytochrome_b"/>
</dbReference>
<dbReference type="InterPro" id="IPR048260">
    <property type="entry name" value="Cytochrome_b_C_euk/bac"/>
</dbReference>
<dbReference type="InterPro" id="IPR048259">
    <property type="entry name" value="Cytochrome_b_N_euk/bac"/>
</dbReference>
<dbReference type="InterPro" id="IPR016174">
    <property type="entry name" value="Di-haem_cyt_TM"/>
</dbReference>
<dbReference type="PANTHER" id="PTHR19271">
    <property type="entry name" value="CYTOCHROME B"/>
    <property type="match status" value="1"/>
</dbReference>
<dbReference type="PANTHER" id="PTHR19271:SF16">
    <property type="entry name" value="CYTOCHROME B"/>
    <property type="match status" value="1"/>
</dbReference>
<dbReference type="Pfam" id="PF00032">
    <property type="entry name" value="Cytochrom_B_C"/>
    <property type="match status" value="1"/>
</dbReference>
<dbReference type="Pfam" id="PF00033">
    <property type="entry name" value="Cytochrome_B"/>
    <property type="match status" value="1"/>
</dbReference>
<dbReference type="PIRSF" id="PIRSF038885">
    <property type="entry name" value="COB"/>
    <property type="match status" value="1"/>
</dbReference>
<dbReference type="SUPFAM" id="SSF81648">
    <property type="entry name" value="a domain/subunit of cytochrome bc1 complex (Ubiquinol-cytochrome c reductase)"/>
    <property type="match status" value="1"/>
</dbReference>
<dbReference type="SUPFAM" id="SSF81342">
    <property type="entry name" value="Transmembrane di-heme cytochromes"/>
    <property type="match status" value="1"/>
</dbReference>
<dbReference type="PROSITE" id="PS51003">
    <property type="entry name" value="CYTB_CTER"/>
    <property type="match status" value="1"/>
</dbReference>
<dbReference type="PROSITE" id="PS51002">
    <property type="entry name" value="CYTB_NTER"/>
    <property type="match status" value="1"/>
</dbReference>
<protein>
    <recommendedName>
        <fullName>Cytochrome b</fullName>
    </recommendedName>
    <alternativeName>
        <fullName>Complex III subunit 3</fullName>
    </alternativeName>
    <alternativeName>
        <fullName>Complex III subunit III</fullName>
    </alternativeName>
    <alternativeName>
        <fullName>Cytochrome b-c1 complex subunit 3</fullName>
    </alternativeName>
    <alternativeName>
        <fullName>Ubiquinol-cytochrome-c reductase complex cytochrome b subunit</fullName>
    </alternativeName>
</protein>
<sequence>MAPNLRKSHPLLKLINNSLIDLPTPSNISAWWNFGSLLGICLLTQILTGLLLATHYTADTTLAFSSVAHTCRNVQYGWLIRNLHANGASFFFICIYLHIGRGFYYGSYLNKETWNTGVILLLALMATAFVGYVLPWGQMSFWGATVITNLFSAIPYIGQTLVEWAWGGFSVDNPTLTRFFALHFLLPFMIAGLAFIHLTFLHESGSNNPLGILSNCDKIPFHPYFSLKDILGFIIMFLPLTTLALFSPNLLGDPENFTPANPLVTPPHIKPEWYFLFAYAILRSIPNKLGGVLALAASVLVLFLTPLLHKSKQRAMTFRPLSQLLFWTLVANLLILTWVGSQPVEHPFIIIGQLASLAYFTILLLLFPIVGALENKMLNY</sequence>
<evidence type="ECO:0000250" key="1"/>
<evidence type="ECO:0000250" key="2">
    <source>
        <dbReference type="UniProtKB" id="P00157"/>
    </source>
</evidence>
<evidence type="ECO:0000255" key="3">
    <source>
        <dbReference type="PROSITE-ProRule" id="PRU00967"/>
    </source>
</evidence>
<evidence type="ECO:0000255" key="4">
    <source>
        <dbReference type="PROSITE-ProRule" id="PRU00968"/>
    </source>
</evidence>
<reference key="1">
    <citation type="journal article" date="2002" name="Mol. Biol. Evol.">
        <title>Mitochondrial DNA sequence evolution and phylogeny of the Atlantic Alcidae, including the extinct great auk (Pinguinus impennis).</title>
        <authorList>
            <person name="Moum T."/>
            <person name="Arnason U."/>
            <person name="Arnason E."/>
        </authorList>
    </citation>
    <scope>NUCLEOTIDE SEQUENCE [GENOMIC DNA]</scope>
    <source>
        <tissue>Heart</tissue>
    </source>
</reference>
<organism>
    <name type="scientific">Uria lomvia</name>
    <name type="common">Thick-billed murre</name>
    <dbReference type="NCBI Taxonomy" id="28711"/>
    <lineage>
        <taxon>Eukaryota</taxon>
        <taxon>Metazoa</taxon>
        <taxon>Chordata</taxon>
        <taxon>Craniata</taxon>
        <taxon>Vertebrata</taxon>
        <taxon>Euteleostomi</taxon>
        <taxon>Archelosauria</taxon>
        <taxon>Archosauria</taxon>
        <taxon>Dinosauria</taxon>
        <taxon>Saurischia</taxon>
        <taxon>Theropoda</taxon>
        <taxon>Coelurosauria</taxon>
        <taxon>Aves</taxon>
        <taxon>Neognathae</taxon>
        <taxon>Neoaves</taxon>
        <taxon>Charadriiformes</taxon>
        <taxon>Alcidae</taxon>
        <taxon>Uria</taxon>
    </lineage>
</organism>
<name>CYB_URILO</name>
<comment type="function">
    <text evidence="2">Component of the ubiquinol-cytochrome c reductase complex (complex III or cytochrome b-c1 complex) that is part of the mitochondrial respiratory chain. The b-c1 complex mediates electron transfer from ubiquinol to cytochrome c. Contributes to the generation of a proton gradient across the mitochondrial membrane that is then used for ATP synthesis.</text>
</comment>
<comment type="cofactor">
    <cofactor evidence="2">
        <name>heme b</name>
        <dbReference type="ChEBI" id="CHEBI:60344"/>
    </cofactor>
    <text evidence="2">Binds 2 heme b groups non-covalently.</text>
</comment>
<comment type="subunit">
    <text evidence="2">The cytochrome bc1 complex contains 11 subunits: 3 respiratory subunits (MT-CYB, CYC1 and UQCRFS1), 2 core proteins (UQCRC1 and UQCRC2) and 6 low-molecular weight proteins (UQCRH/QCR6, UQCRB/QCR7, UQCRQ/QCR8, UQCR10/QCR9, UQCR11/QCR10 and a cleavage product of UQCRFS1). This cytochrome bc1 complex then forms a dimer.</text>
</comment>
<comment type="subcellular location">
    <subcellularLocation>
        <location evidence="2">Mitochondrion inner membrane</location>
        <topology evidence="2">Multi-pass membrane protein</topology>
    </subcellularLocation>
</comment>
<comment type="miscellaneous">
    <text evidence="1">Heme 1 (or BL or b562) is low-potential and absorbs at about 562 nm, and heme 2 (or BH or b566) is high-potential and absorbs at about 566 nm.</text>
</comment>
<comment type="similarity">
    <text evidence="3 4">Belongs to the cytochrome b family.</text>
</comment>
<comment type="caution">
    <text evidence="2">The full-length protein contains only eight transmembrane helices, not nine as predicted by bioinformatics tools.</text>
</comment>
<proteinExistence type="inferred from homology"/>
<accession>Q8LWM2</accession>
<gene>
    <name type="primary">MT-CYB</name>
    <name type="synonym">COB</name>
    <name type="synonym">CYTB</name>
    <name type="synonym">MTCYB</name>
</gene>